<accession>O14817</accession>
<accession>Q6IAP6</accession>
<dbReference type="EMBL" id="AF022813">
    <property type="protein sequence ID" value="AAC51864.1"/>
    <property type="molecule type" value="mRNA"/>
</dbReference>
<dbReference type="EMBL" id="AF054841">
    <property type="protein sequence ID" value="AAC69717.1"/>
    <property type="molecule type" value="mRNA"/>
</dbReference>
<dbReference type="EMBL" id="AK291089">
    <property type="protein sequence ID" value="BAF83778.1"/>
    <property type="molecule type" value="mRNA"/>
</dbReference>
<dbReference type="EMBL" id="BT006776">
    <property type="protein sequence ID" value="AAP35422.1"/>
    <property type="molecule type" value="mRNA"/>
</dbReference>
<dbReference type="EMBL" id="CR457108">
    <property type="protein sequence ID" value="CAG33389.1"/>
    <property type="molecule type" value="mRNA"/>
</dbReference>
<dbReference type="EMBL" id="CH471158">
    <property type="protein sequence ID" value="EAX02409.1"/>
    <property type="molecule type" value="Genomic_DNA"/>
</dbReference>
<dbReference type="EMBL" id="BC000389">
    <property type="protein sequence ID" value="AAH00389.1"/>
    <property type="molecule type" value="mRNA"/>
</dbReference>
<dbReference type="EMBL" id="BC019314">
    <property type="protein sequence ID" value="AAH19314.1"/>
    <property type="molecule type" value="mRNA"/>
</dbReference>
<dbReference type="EMBL" id="BC093031">
    <property type="protein sequence ID" value="AAH93031.1"/>
    <property type="molecule type" value="mRNA"/>
</dbReference>
<dbReference type="CCDS" id="CCDS7721.1"/>
<dbReference type="PIR" id="A59265">
    <property type="entry name" value="A59265"/>
</dbReference>
<dbReference type="RefSeq" id="NP_001020405.1">
    <property type="nucleotide sequence ID" value="NM_001025234.2"/>
</dbReference>
<dbReference type="RefSeq" id="NP_001020406.1">
    <property type="nucleotide sequence ID" value="NM_001025235.2"/>
</dbReference>
<dbReference type="RefSeq" id="NP_001020407.1">
    <property type="nucleotide sequence ID" value="NM_001025236.2"/>
</dbReference>
<dbReference type="RefSeq" id="NP_001020408.1">
    <property type="nucleotide sequence ID" value="NM_001025237.2"/>
</dbReference>
<dbReference type="RefSeq" id="NP_001020409.1">
    <property type="nucleotide sequence ID" value="NM_001025238.2"/>
</dbReference>
<dbReference type="RefSeq" id="NP_001020410.1">
    <property type="nucleotide sequence ID" value="NM_001025239.1"/>
</dbReference>
<dbReference type="RefSeq" id="NP_003262.1">
    <property type="nucleotide sequence ID" value="NM_003271.5"/>
</dbReference>
<dbReference type="RefSeq" id="XP_005253159.1">
    <property type="nucleotide sequence ID" value="XM_005253102.2"/>
</dbReference>
<dbReference type="RefSeq" id="XP_054225747.1">
    <property type="nucleotide sequence ID" value="XM_054369772.1"/>
</dbReference>
<dbReference type="SMR" id="O14817"/>
<dbReference type="BioGRID" id="112961">
    <property type="interactions" value="51"/>
</dbReference>
<dbReference type="CORUM" id="O14817"/>
<dbReference type="FunCoup" id="O14817">
    <property type="interactions" value="78"/>
</dbReference>
<dbReference type="IntAct" id="O14817">
    <property type="interactions" value="40"/>
</dbReference>
<dbReference type="MINT" id="O14817"/>
<dbReference type="STRING" id="9606.ENSP00000380553"/>
<dbReference type="GlyCosmos" id="O14817">
    <property type="glycosylation" value="2 sites, No reported glycans"/>
</dbReference>
<dbReference type="GlyGen" id="O14817">
    <property type="glycosylation" value="2 sites"/>
</dbReference>
<dbReference type="iPTMnet" id="O14817"/>
<dbReference type="PhosphoSitePlus" id="O14817"/>
<dbReference type="SwissPalm" id="O14817"/>
<dbReference type="BioMuta" id="TSPAN4"/>
<dbReference type="jPOST" id="O14817"/>
<dbReference type="MassIVE" id="O14817"/>
<dbReference type="PaxDb" id="9606-ENSP00000380553"/>
<dbReference type="PeptideAtlas" id="O14817"/>
<dbReference type="ProteomicsDB" id="48255"/>
<dbReference type="Pumba" id="O14817"/>
<dbReference type="Antibodypedia" id="10103">
    <property type="antibodies" value="71 antibodies from 19 providers"/>
</dbReference>
<dbReference type="DNASU" id="7106"/>
<dbReference type="Ensembl" id="ENST00000397397.7">
    <property type="protein sequence ID" value="ENSP00000380552.2"/>
    <property type="gene ID" value="ENSG00000214063.12"/>
</dbReference>
<dbReference type="Ensembl" id="ENST00000397404.5">
    <property type="protein sequence ID" value="ENSP00000380553.1"/>
    <property type="gene ID" value="ENSG00000214063.12"/>
</dbReference>
<dbReference type="Ensembl" id="ENST00000397406.5">
    <property type="protein sequence ID" value="ENSP00000380554.1"/>
    <property type="gene ID" value="ENSG00000214063.12"/>
</dbReference>
<dbReference type="Ensembl" id="ENST00000397408.5">
    <property type="protein sequence ID" value="ENSP00000380555.1"/>
    <property type="gene ID" value="ENSG00000214063.12"/>
</dbReference>
<dbReference type="Ensembl" id="ENST00000397411.6">
    <property type="protein sequence ID" value="ENSP00000380558.2"/>
    <property type="gene ID" value="ENSG00000214063.12"/>
</dbReference>
<dbReference type="Ensembl" id="ENST00000409543.6">
    <property type="protein sequence ID" value="ENSP00000386513.2"/>
    <property type="gene ID" value="ENSG00000214063.12"/>
</dbReference>
<dbReference type="GeneID" id="7106"/>
<dbReference type="KEGG" id="hsa:7106"/>
<dbReference type="MANE-Select" id="ENST00000397397.7">
    <property type="protein sequence ID" value="ENSP00000380552.2"/>
    <property type="RefSeq nucleotide sequence ID" value="NM_003271.5"/>
    <property type="RefSeq protein sequence ID" value="NP_003262.1"/>
</dbReference>
<dbReference type="UCSC" id="uc001lsd.2">
    <property type="organism name" value="human"/>
</dbReference>
<dbReference type="AGR" id="HGNC:11859"/>
<dbReference type="CTD" id="7106"/>
<dbReference type="DisGeNET" id="7106"/>
<dbReference type="GeneCards" id="TSPAN4"/>
<dbReference type="HGNC" id="HGNC:11859">
    <property type="gene designation" value="TSPAN4"/>
</dbReference>
<dbReference type="HPA" id="ENSG00000214063">
    <property type="expression patterns" value="Low tissue specificity"/>
</dbReference>
<dbReference type="MIM" id="602644">
    <property type="type" value="gene"/>
</dbReference>
<dbReference type="neXtProt" id="NX_O14817"/>
<dbReference type="OpenTargets" id="ENSG00000214063"/>
<dbReference type="PharmGKB" id="PA36560"/>
<dbReference type="VEuPathDB" id="HostDB:ENSG00000214063"/>
<dbReference type="eggNOG" id="KOG3882">
    <property type="taxonomic scope" value="Eukaryota"/>
</dbReference>
<dbReference type="GeneTree" id="ENSGT00940000160434"/>
<dbReference type="InParanoid" id="O14817"/>
<dbReference type="OMA" id="KADTYCT"/>
<dbReference type="OrthoDB" id="432835at2759"/>
<dbReference type="PAN-GO" id="O14817">
    <property type="GO annotations" value="1 GO annotation based on evolutionary models"/>
</dbReference>
<dbReference type="PhylomeDB" id="O14817"/>
<dbReference type="TreeFam" id="TF352892"/>
<dbReference type="PathwayCommons" id="O14817"/>
<dbReference type="SignaLink" id="O14817"/>
<dbReference type="BioGRID-ORCS" id="7106">
    <property type="hits" value="18 hits in 1152 CRISPR screens"/>
</dbReference>
<dbReference type="ChiTaRS" id="TSPAN4">
    <property type="organism name" value="human"/>
</dbReference>
<dbReference type="GeneWiki" id="TSPAN4"/>
<dbReference type="GenomeRNAi" id="7106"/>
<dbReference type="Pharos" id="O14817">
    <property type="development level" value="Tbio"/>
</dbReference>
<dbReference type="PRO" id="PR:O14817"/>
<dbReference type="Proteomes" id="UP000005640">
    <property type="component" value="Chromosome 11"/>
</dbReference>
<dbReference type="RNAct" id="O14817">
    <property type="molecule type" value="protein"/>
</dbReference>
<dbReference type="Bgee" id="ENSG00000214063">
    <property type="expression patterns" value="Expressed in stromal cell of endometrium and 199 other cell types or tissues"/>
</dbReference>
<dbReference type="ExpressionAtlas" id="O14817">
    <property type="expression patterns" value="baseline and differential"/>
</dbReference>
<dbReference type="GO" id="GO:0005925">
    <property type="term" value="C:focal adhesion"/>
    <property type="evidence" value="ECO:0007005"/>
    <property type="project" value="UniProtKB"/>
</dbReference>
<dbReference type="GO" id="GO:0005886">
    <property type="term" value="C:plasma membrane"/>
    <property type="evidence" value="ECO:0000314"/>
    <property type="project" value="UniProtKB"/>
</dbReference>
<dbReference type="GO" id="GO:0031982">
    <property type="term" value="C:vesicle"/>
    <property type="evidence" value="ECO:0000314"/>
    <property type="project" value="UniProtKB"/>
</dbReference>
<dbReference type="GO" id="GO:0003823">
    <property type="term" value="F:antigen binding"/>
    <property type="evidence" value="ECO:0000314"/>
    <property type="project" value="UniProtKB"/>
</dbReference>
<dbReference type="GO" id="GO:0005178">
    <property type="term" value="F:integrin binding"/>
    <property type="evidence" value="ECO:0000353"/>
    <property type="project" value="UniProtKB"/>
</dbReference>
<dbReference type="GO" id="GO:0065003">
    <property type="term" value="P:protein-containing complex assembly"/>
    <property type="evidence" value="ECO:0000314"/>
    <property type="project" value="UniProtKB"/>
</dbReference>
<dbReference type="CDD" id="cd03165">
    <property type="entry name" value="NET-5_like_LEL"/>
    <property type="match status" value="1"/>
</dbReference>
<dbReference type="FunFam" id="1.10.1450.10:FF:000006">
    <property type="entry name" value="Tetraspanin"/>
    <property type="match status" value="1"/>
</dbReference>
<dbReference type="Gene3D" id="1.10.1450.10">
    <property type="entry name" value="Tetraspanin"/>
    <property type="match status" value="1"/>
</dbReference>
<dbReference type="InterPro" id="IPR018499">
    <property type="entry name" value="Tetraspanin/Peripherin"/>
</dbReference>
<dbReference type="InterPro" id="IPR000301">
    <property type="entry name" value="Tetraspanin_animals"/>
</dbReference>
<dbReference type="InterPro" id="IPR018503">
    <property type="entry name" value="Tetraspanin_CS"/>
</dbReference>
<dbReference type="InterPro" id="IPR008952">
    <property type="entry name" value="Tetraspanin_EC2_sf"/>
</dbReference>
<dbReference type="PANTHER" id="PTHR19282">
    <property type="entry name" value="TETRASPANIN"/>
    <property type="match status" value="1"/>
</dbReference>
<dbReference type="PANTHER" id="PTHR19282:SF40">
    <property type="entry name" value="TETRASPANIN-4"/>
    <property type="match status" value="1"/>
</dbReference>
<dbReference type="Pfam" id="PF00335">
    <property type="entry name" value="Tetraspanin"/>
    <property type="match status" value="1"/>
</dbReference>
<dbReference type="PIRSF" id="PIRSF002419">
    <property type="entry name" value="Tetraspanin"/>
    <property type="match status" value="1"/>
</dbReference>
<dbReference type="PRINTS" id="PR00259">
    <property type="entry name" value="TMFOUR"/>
</dbReference>
<dbReference type="SUPFAM" id="SSF48652">
    <property type="entry name" value="Tetraspanin"/>
    <property type="match status" value="1"/>
</dbReference>
<dbReference type="PROSITE" id="PS00421">
    <property type="entry name" value="TM4_1"/>
    <property type="match status" value="1"/>
</dbReference>
<feature type="chain" id="PRO_0000219241" description="Tetraspanin-4">
    <location>
        <begin position="1"/>
        <end position="238"/>
    </location>
</feature>
<feature type="topological domain" description="Cytoplasmic" evidence="1">
    <location>
        <begin position="1"/>
        <end position="13"/>
    </location>
</feature>
<feature type="transmembrane region" description="Helical" evidence="1">
    <location>
        <begin position="14"/>
        <end position="34"/>
    </location>
</feature>
<feature type="topological domain" description="Extracellular" evidence="1">
    <location>
        <begin position="35"/>
        <end position="55"/>
    </location>
</feature>
<feature type="transmembrane region" description="Helical" evidence="1">
    <location>
        <begin position="56"/>
        <end position="76"/>
    </location>
</feature>
<feature type="topological domain" description="Cytoplasmic" evidence="1">
    <location>
        <begin position="77"/>
        <end position="85"/>
    </location>
</feature>
<feature type="transmembrane region" description="Helical" evidence="1">
    <location>
        <begin position="86"/>
        <end position="106"/>
    </location>
</feature>
<feature type="topological domain" description="Extracellular" evidence="1">
    <location>
        <begin position="107"/>
        <end position="201"/>
    </location>
</feature>
<feature type="transmembrane region" description="Helical" evidence="1">
    <location>
        <begin position="202"/>
        <end position="222"/>
    </location>
</feature>
<feature type="topological domain" description="Cytoplasmic" evidence="1">
    <location>
        <begin position="223"/>
        <end position="238"/>
    </location>
</feature>
<feature type="glycosylation site" description="N-linked (GlcNAc...) asparagine" evidence="1">
    <location>
        <position position="152"/>
    </location>
</feature>
<feature type="glycosylation site" description="N-linked (GlcNAc...) asparagine" evidence="3">
    <location>
        <position position="161"/>
    </location>
</feature>
<feature type="sequence variant" id="VAR_036616" description="In a breast cancer sample; somatic mutation." evidence="2">
    <original>I</original>
    <variation>M</variation>
    <location>
        <position position="67"/>
    </location>
</feature>
<gene>
    <name type="primary">TSPAN4</name>
    <name type="synonym">NAG2</name>
    <name type="synonym">TM4SF7</name>
</gene>
<organism>
    <name type="scientific">Homo sapiens</name>
    <name type="common">Human</name>
    <dbReference type="NCBI Taxonomy" id="9606"/>
    <lineage>
        <taxon>Eukaryota</taxon>
        <taxon>Metazoa</taxon>
        <taxon>Chordata</taxon>
        <taxon>Craniata</taxon>
        <taxon>Vertebrata</taxon>
        <taxon>Euteleostomi</taxon>
        <taxon>Mammalia</taxon>
        <taxon>Eutheria</taxon>
        <taxon>Euarchontoglires</taxon>
        <taxon>Primates</taxon>
        <taxon>Haplorrhini</taxon>
        <taxon>Catarrhini</taxon>
        <taxon>Hominidae</taxon>
        <taxon>Homo</taxon>
    </lineage>
</organism>
<name>TSN4_HUMAN</name>
<reference key="1">
    <citation type="journal article" date="1997" name="J. Biol. Chem.">
        <title>NAG-2, a novel transmembrane-4 superfamily (TM4SF) protein that complexes with integrins and other TM4SF proteins.</title>
        <authorList>
            <person name="Tachibana I."/>
            <person name="Bodorova J."/>
            <person name="Berditchevski F."/>
            <person name="Zutter M.M."/>
            <person name="Hemler M.E."/>
        </authorList>
    </citation>
    <scope>NUCLEOTIDE SEQUENCE [MRNA]</scope>
</reference>
<reference key="2">
    <citation type="journal article" date="1998" name="Biochim. Biophys. Acta">
        <title>Sequences and expression of six new members of the tetraspanin/TM4SF family.</title>
        <authorList>
            <person name="Todd S.C."/>
            <person name="Doctor V.S."/>
            <person name="Levy S."/>
        </authorList>
    </citation>
    <scope>NUCLEOTIDE SEQUENCE [MRNA]</scope>
</reference>
<reference key="3">
    <citation type="journal article" date="2004" name="Nat. Genet.">
        <title>Complete sequencing and characterization of 21,243 full-length human cDNAs.</title>
        <authorList>
            <person name="Ota T."/>
            <person name="Suzuki Y."/>
            <person name="Nishikawa T."/>
            <person name="Otsuki T."/>
            <person name="Sugiyama T."/>
            <person name="Irie R."/>
            <person name="Wakamatsu A."/>
            <person name="Hayashi K."/>
            <person name="Sato H."/>
            <person name="Nagai K."/>
            <person name="Kimura K."/>
            <person name="Makita H."/>
            <person name="Sekine M."/>
            <person name="Obayashi M."/>
            <person name="Nishi T."/>
            <person name="Shibahara T."/>
            <person name="Tanaka T."/>
            <person name="Ishii S."/>
            <person name="Yamamoto J."/>
            <person name="Saito K."/>
            <person name="Kawai Y."/>
            <person name="Isono Y."/>
            <person name="Nakamura Y."/>
            <person name="Nagahari K."/>
            <person name="Murakami K."/>
            <person name="Yasuda T."/>
            <person name="Iwayanagi T."/>
            <person name="Wagatsuma M."/>
            <person name="Shiratori A."/>
            <person name="Sudo H."/>
            <person name="Hosoiri T."/>
            <person name="Kaku Y."/>
            <person name="Kodaira H."/>
            <person name="Kondo H."/>
            <person name="Sugawara M."/>
            <person name="Takahashi M."/>
            <person name="Kanda K."/>
            <person name="Yokoi T."/>
            <person name="Furuya T."/>
            <person name="Kikkawa E."/>
            <person name="Omura Y."/>
            <person name="Abe K."/>
            <person name="Kamihara K."/>
            <person name="Katsuta N."/>
            <person name="Sato K."/>
            <person name="Tanikawa M."/>
            <person name="Yamazaki M."/>
            <person name="Ninomiya K."/>
            <person name="Ishibashi T."/>
            <person name="Yamashita H."/>
            <person name="Murakawa K."/>
            <person name="Fujimori K."/>
            <person name="Tanai H."/>
            <person name="Kimata M."/>
            <person name="Watanabe M."/>
            <person name="Hiraoka S."/>
            <person name="Chiba Y."/>
            <person name="Ishida S."/>
            <person name="Ono Y."/>
            <person name="Takiguchi S."/>
            <person name="Watanabe S."/>
            <person name="Yosida M."/>
            <person name="Hotuta T."/>
            <person name="Kusano J."/>
            <person name="Kanehori K."/>
            <person name="Takahashi-Fujii A."/>
            <person name="Hara H."/>
            <person name="Tanase T.-O."/>
            <person name="Nomura Y."/>
            <person name="Togiya S."/>
            <person name="Komai F."/>
            <person name="Hara R."/>
            <person name="Takeuchi K."/>
            <person name="Arita M."/>
            <person name="Imose N."/>
            <person name="Musashino K."/>
            <person name="Yuuki H."/>
            <person name="Oshima A."/>
            <person name="Sasaki N."/>
            <person name="Aotsuka S."/>
            <person name="Yoshikawa Y."/>
            <person name="Matsunawa H."/>
            <person name="Ichihara T."/>
            <person name="Shiohata N."/>
            <person name="Sano S."/>
            <person name="Moriya S."/>
            <person name="Momiyama H."/>
            <person name="Satoh N."/>
            <person name="Takami S."/>
            <person name="Terashima Y."/>
            <person name="Suzuki O."/>
            <person name="Nakagawa S."/>
            <person name="Senoh A."/>
            <person name="Mizoguchi H."/>
            <person name="Goto Y."/>
            <person name="Shimizu F."/>
            <person name="Wakebe H."/>
            <person name="Hishigaki H."/>
            <person name="Watanabe T."/>
            <person name="Sugiyama A."/>
            <person name="Takemoto M."/>
            <person name="Kawakami B."/>
            <person name="Yamazaki M."/>
            <person name="Watanabe K."/>
            <person name="Kumagai A."/>
            <person name="Itakura S."/>
            <person name="Fukuzumi Y."/>
            <person name="Fujimori Y."/>
            <person name="Komiyama M."/>
            <person name="Tashiro H."/>
            <person name="Tanigami A."/>
            <person name="Fujiwara T."/>
            <person name="Ono T."/>
            <person name="Yamada K."/>
            <person name="Fujii Y."/>
            <person name="Ozaki K."/>
            <person name="Hirao M."/>
            <person name="Ohmori Y."/>
            <person name="Kawabata A."/>
            <person name="Hikiji T."/>
            <person name="Kobatake N."/>
            <person name="Inagaki H."/>
            <person name="Ikema Y."/>
            <person name="Okamoto S."/>
            <person name="Okitani R."/>
            <person name="Kawakami T."/>
            <person name="Noguchi S."/>
            <person name="Itoh T."/>
            <person name="Shigeta K."/>
            <person name="Senba T."/>
            <person name="Matsumura K."/>
            <person name="Nakajima Y."/>
            <person name="Mizuno T."/>
            <person name="Morinaga M."/>
            <person name="Sasaki M."/>
            <person name="Togashi T."/>
            <person name="Oyama M."/>
            <person name="Hata H."/>
            <person name="Watanabe M."/>
            <person name="Komatsu T."/>
            <person name="Mizushima-Sugano J."/>
            <person name="Satoh T."/>
            <person name="Shirai Y."/>
            <person name="Takahashi Y."/>
            <person name="Nakagawa K."/>
            <person name="Okumura K."/>
            <person name="Nagase T."/>
            <person name="Nomura N."/>
            <person name="Kikuchi H."/>
            <person name="Masuho Y."/>
            <person name="Yamashita R."/>
            <person name="Nakai K."/>
            <person name="Yada T."/>
            <person name="Nakamura Y."/>
            <person name="Ohara O."/>
            <person name="Isogai T."/>
            <person name="Sugano S."/>
        </authorList>
    </citation>
    <scope>NUCLEOTIDE SEQUENCE [LARGE SCALE MRNA]</scope>
    <source>
        <tissue>Teratocarcinoma</tissue>
    </source>
</reference>
<reference key="4">
    <citation type="submission" date="2003-05" db="EMBL/GenBank/DDBJ databases">
        <title>Cloning of human full-length CDSs in BD Creator(TM) system donor vector.</title>
        <authorList>
            <person name="Kalnine N."/>
            <person name="Chen X."/>
            <person name="Rolfs A."/>
            <person name="Halleck A."/>
            <person name="Hines L."/>
            <person name="Eisenstein S."/>
            <person name="Koundinya M."/>
            <person name="Raphael J."/>
            <person name="Moreira D."/>
            <person name="Kelley T."/>
            <person name="LaBaer J."/>
            <person name="Lin Y."/>
            <person name="Phelan M."/>
            <person name="Farmer A."/>
        </authorList>
    </citation>
    <scope>NUCLEOTIDE SEQUENCE [LARGE SCALE MRNA]</scope>
</reference>
<reference key="5">
    <citation type="submission" date="2004-06" db="EMBL/GenBank/DDBJ databases">
        <title>Cloning of human full open reading frames in Gateway(TM) system entry vector (pDONR201).</title>
        <authorList>
            <person name="Ebert L."/>
            <person name="Schick M."/>
            <person name="Neubert P."/>
            <person name="Schatten R."/>
            <person name="Henze S."/>
            <person name="Korn B."/>
        </authorList>
    </citation>
    <scope>NUCLEOTIDE SEQUENCE [LARGE SCALE MRNA]</scope>
</reference>
<reference key="6">
    <citation type="submission" date="2005-07" db="EMBL/GenBank/DDBJ databases">
        <authorList>
            <person name="Mural R.J."/>
            <person name="Istrail S."/>
            <person name="Sutton G.G."/>
            <person name="Florea L."/>
            <person name="Halpern A.L."/>
            <person name="Mobarry C.M."/>
            <person name="Lippert R."/>
            <person name="Walenz B."/>
            <person name="Shatkay H."/>
            <person name="Dew I."/>
            <person name="Miller J.R."/>
            <person name="Flanigan M.J."/>
            <person name="Edwards N.J."/>
            <person name="Bolanos R."/>
            <person name="Fasulo D."/>
            <person name="Halldorsson B.V."/>
            <person name="Hannenhalli S."/>
            <person name="Turner R."/>
            <person name="Yooseph S."/>
            <person name="Lu F."/>
            <person name="Nusskern D.R."/>
            <person name="Shue B.C."/>
            <person name="Zheng X.H."/>
            <person name="Zhong F."/>
            <person name="Delcher A.L."/>
            <person name="Huson D.H."/>
            <person name="Kravitz S.A."/>
            <person name="Mouchard L."/>
            <person name="Reinert K."/>
            <person name="Remington K.A."/>
            <person name="Clark A.G."/>
            <person name="Waterman M.S."/>
            <person name="Eichler E.E."/>
            <person name="Adams M.D."/>
            <person name="Hunkapiller M.W."/>
            <person name="Myers E.W."/>
            <person name="Venter J.C."/>
        </authorList>
    </citation>
    <scope>NUCLEOTIDE SEQUENCE [LARGE SCALE GENOMIC DNA]</scope>
</reference>
<reference key="7">
    <citation type="journal article" date="2004" name="Genome Res.">
        <title>The status, quality, and expansion of the NIH full-length cDNA project: the Mammalian Gene Collection (MGC).</title>
        <authorList>
            <consortium name="The MGC Project Team"/>
        </authorList>
    </citation>
    <scope>NUCLEOTIDE SEQUENCE [LARGE SCALE MRNA]</scope>
    <source>
        <tissue>Lung</tissue>
    </source>
</reference>
<reference key="8">
    <citation type="journal article" date="2009" name="J. Proteome Res.">
        <title>Glycoproteomics analysis of human liver tissue by combination of multiple enzyme digestion and hydrazide chemistry.</title>
        <authorList>
            <person name="Chen R."/>
            <person name="Jiang X."/>
            <person name="Sun D."/>
            <person name="Han G."/>
            <person name="Wang F."/>
            <person name="Ye M."/>
            <person name="Wang L."/>
            <person name="Zou H."/>
        </authorList>
    </citation>
    <scope>GLYCOSYLATION [LARGE SCALE ANALYSIS] AT ASN-161</scope>
    <source>
        <tissue>Liver</tissue>
    </source>
</reference>
<reference key="9">
    <citation type="journal article" date="2015" name="Cell Res.">
        <title>Discovery of the migrasome, an organelle mediating release of cytoplasmic contents during cell migration.</title>
        <authorList>
            <person name="Ma L."/>
            <person name="Li Y."/>
            <person name="Peng J."/>
            <person name="Wu D."/>
            <person name="Zhao X."/>
            <person name="Cui Y."/>
            <person name="Chen L."/>
            <person name="Yan X."/>
            <person name="Du Y."/>
            <person name="Yu L."/>
        </authorList>
    </citation>
    <scope>SUBCELLULAR LOCATION</scope>
</reference>
<reference key="10">
    <citation type="journal article" date="2019" name="Nat. Cell Biol.">
        <title>Migrasome formation is mediated by assembly of micron-scale tetraspanin macrodomains.</title>
        <authorList>
            <person name="Huang Y."/>
            <person name="Zucker B."/>
            <person name="Zhang S."/>
            <person name="Elias S."/>
            <person name="Zhu Y."/>
            <person name="Chen H."/>
            <person name="Ding T."/>
            <person name="Li Y."/>
            <person name="Sun Y."/>
            <person name="Lou J."/>
            <person name="Kozlov M.M."/>
            <person name="Yu L."/>
        </authorList>
    </citation>
    <scope>FUNCTION</scope>
</reference>
<reference key="11">
    <citation type="journal article" date="2021" name="Biomolecules">
        <title>Identification of TSPAN4 as Novel Histamine H4 Receptor Interactor.</title>
        <authorList>
            <person name="Ma X."/>
            <person name="Verweij E.W.E."/>
            <person name="Siderius M."/>
            <person name="Leurs R."/>
            <person name="Vischer H.F."/>
        </authorList>
    </citation>
    <scope>FUNCTION</scope>
    <scope>INTERACTION WITH HRH4</scope>
    <scope>SUBCELLULAR LOCATION</scope>
</reference>
<reference key="12">
    <citation type="journal article" date="2022" name="Proc. Natl. Acad. Sci. U.S.A.">
        <title>Transmembrane proteins tetraspanin 4 and CD9 sense membrane curvature.</title>
        <authorList>
            <person name="Dharan R."/>
            <person name="Goren S."/>
            <person name="Cheppali S.K."/>
            <person name="Shendrik P."/>
            <person name="Brand G."/>
            <person name="Vaknin A."/>
            <person name="Yu L."/>
            <person name="Kozlov M.M."/>
            <person name="Sorkin R."/>
        </authorList>
    </citation>
    <scope>FUNCTION</scope>
</reference>
<reference key="13">
    <citation type="journal article" date="2023" name="Nat. Commun.">
        <title>Tetraspanin 4 stabilizes membrane swellings and facilitates their maturation into migrasomes.</title>
        <authorList>
            <person name="Dharan R."/>
            <person name="Huang Y."/>
            <person name="Cheppali S.K."/>
            <person name="Goren S."/>
            <person name="Shendrik P."/>
            <person name="Wang W."/>
            <person name="Qiao J."/>
            <person name="Kozlov M.M."/>
            <person name="Yu L."/>
            <person name="Sorkin R."/>
        </authorList>
    </citation>
    <scope>FUNCTION</scope>
</reference>
<reference key="14">
    <citation type="journal article" date="2006" name="Science">
        <title>The consensus coding sequences of human breast and colorectal cancers.</title>
        <authorList>
            <person name="Sjoeblom T."/>
            <person name="Jones S."/>
            <person name="Wood L.D."/>
            <person name="Parsons D.W."/>
            <person name="Lin J."/>
            <person name="Barber T.D."/>
            <person name="Mandelker D."/>
            <person name="Leary R.J."/>
            <person name="Ptak J."/>
            <person name="Silliman N."/>
            <person name="Szabo S."/>
            <person name="Buckhaults P."/>
            <person name="Farrell C."/>
            <person name="Meeh P."/>
            <person name="Markowitz S.D."/>
            <person name="Willis J."/>
            <person name="Dawson D."/>
            <person name="Willson J.K.V."/>
            <person name="Gazdar A.F."/>
            <person name="Hartigan J."/>
            <person name="Wu L."/>
            <person name="Liu C."/>
            <person name="Parmigiani G."/>
            <person name="Park B.H."/>
            <person name="Bachman K.E."/>
            <person name="Papadopoulos N."/>
            <person name="Vogelstein B."/>
            <person name="Kinzler K.W."/>
            <person name="Velculescu V.E."/>
        </authorList>
    </citation>
    <scope>VARIANT [LARGE SCALE ANALYSIS] MET-67</scope>
</reference>
<proteinExistence type="evidence at protein level"/>
<keyword id="KW-1003">Cell membrane</keyword>
<keyword id="KW-0325">Glycoprotein</keyword>
<keyword id="KW-0472">Membrane</keyword>
<keyword id="KW-1267">Proteomics identification</keyword>
<keyword id="KW-1185">Reference proteome</keyword>
<keyword id="KW-0812">Transmembrane</keyword>
<keyword id="KW-1133">Transmembrane helix</keyword>
<protein>
    <recommendedName>
        <fullName>Tetraspanin-4</fullName>
        <shortName>Tspan-4</shortName>
    </recommendedName>
    <alternativeName>
        <fullName>Novel antigen 2</fullName>
        <shortName>NAG-2</shortName>
    </alternativeName>
    <alternativeName>
        <fullName>Transmembrane 4 superfamily member 7</fullName>
    </alternativeName>
</protein>
<evidence type="ECO:0000255" key="1"/>
<evidence type="ECO:0000269" key="2">
    <source>
    </source>
</evidence>
<evidence type="ECO:0000269" key="3">
    <source>
    </source>
</evidence>
<evidence type="ECO:0000269" key="4">
    <source>
    </source>
</evidence>
<evidence type="ECO:0000269" key="5">
    <source>
    </source>
</evidence>
<evidence type="ECO:0000269" key="6">
    <source>
    </source>
</evidence>
<evidence type="ECO:0000269" key="7">
    <source>
    </source>
</evidence>
<evidence type="ECO:0000269" key="8">
    <source>
    </source>
</evidence>
<evidence type="ECO:0000305" key="9"/>
<comment type="function">
    <text evidence="5 6 7 8">Structural component of specialized membrane microdomains known as tetraspanin-enriched microdomains (TERMs), which act as platforms for receptor clustering and signaling. Plays an essential role in migrasome formation and migration on retracting fibers at the rear end of migrating cells (PubMed:31371828). Migrasomes are cellular organelles that form as large vesicle-like structures on retraction fibers of migrating cells (PubMed:31371828). Mechanistically, acts as a membrane curvature sensor and participates in stabilizing the migrasome structure in a late stage of biogenesis (PubMed:36252000, PubMed:36823145). May also play a regulatory role for the histamine H4 receptor/HRH4 without affecting histamine binding to HRH4 or signaling (PubMed:34439793).</text>
</comment>
<comment type="subunit">
    <text evidence="6">Forms a complex with integrins. Interacts with HRH4 (PubMed:34439793).</text>
</comment>
<comment type="interaction">
    <interactant intactId="EBI-8652667">
        <id>O14817</id>
    </interactant>
    <interactant intactId="EBI-744545">
        <id>Q8NEC5</id>
        <label>CATSPER1</label>
    </interactant>
    <organismsDiffer>false</organismsDiffer>
    <experiments>3</experiments>
</comment>
<comment type="interaction">
    <interactant intactId="EBI-8652667">
        <id>O14817</id>
    </interactant>
    <interactant intactId="EBI-947551">
        <id>Q9H2X0</id>
        <label>CHRD</label>
    </interactant>
    <organismsDiffer>false</organismsDiffer>
    <experiments>3</experiments>
</comment>
<comment type="interaction">
    <interactant intactId="EBI-8652667">
        <id>O14817</id>
    </interactant>
    <interactant intactId="EBI-11749983">
        <id>Q9UHP7-3</id>
        <label>CLEC2D</label>
    </interactant>
    <organismsDiffer>false</organismsDiffer>
    <experiments>3</experiments>
</comment>
<comment type="interaction">
    <interactant intactId="EBI-8652667">
        <id>O14817</id>
    </interactant>
    <interactant intactId="EBI-10192698">
        <id>Q02930-3</id>
        <label>CREB5</label>
    </interactant>
    <organismsDiffer>false</organismsDiffer>
    <experiments>3</experiments>
</comment>
<comment type="interaction">
    <interactant intactId="EBI-8652667">
        <id>O14817</id>
    </interactant>
    <interactant intactId="EBI-3867333">
        <id>A8MQ03</id>
        <label>CYSRT1</label>
    </interactant>
    <organismsDiffer>false</organismsDiffer>
    <experiments>6</experiments>
</comment>
<comment type="interaction">
    <interactant intactId="EBI-8652667">
        <id>O14817</id>
    </interactant>
    <interactant intactId="EBI-715362">
        <id>Q9H8M9</id>
        <label>EVA1A</label>
    </interactant>
    <organismsDiffer>false</organismsDiffer>
    <experiments>3</experiments>
</comment>
<comment type="interaction">
    <interactant intactId="EBI-8652667">
        <id>O14817</id>
    </interactant>
    <interactant intactId="EBI-11977403">
        <id>A0A0C3SFZ9</id>
        <label>FCHO1</label>
    </interactant>
    <organismsDiffer>false</organismsDiffer>
    <experiments>3</experiments>
</comment>
<comment type="interaction">
    <interactant intactId="EBI-8652667">
        <id>O14817</id>
    </interactant>
    <interactant intactId="EBI-725515">
        <id>O43559</id>
        <label>FRS3</label>
    </interactant>
    <organismsDiffer>false</organismsDiffer>
    <experiments>3</experiments>
</comment>
<comment type="interaction">
    <interactant intactId="EBI-8652667">
        <id>O14817</id>
    </interactant>
    <interactant intactId="EBI-11975289">
        <id>Q9Y223-2</id>
        <label>GNE</label>
    </interactant>
    <organismsDiffer>false</organismsDiffer>
    <experiments>3</experiments>
</comment>
<comment type="interaction">
    <interactant intactId="EBI-8652667">
        <id>O14817</id>
    </interactant>
    <interactant intactId="EBI-747754">
        <id>P28799</id>
        <label>GRN</label>
    </interactant>
    <organismsDiffer>false</organismsDiffer>
    <experiments>3</experiments>
</comment>
<comment type="interaction">
    <interactant intactId="EBI-8652667">
        <id>O14817</id>
    </interactant>
    <interactant intactId="EBI-11978177">
        <id>Q96NT3-2</id>
        <label>GUCD1</label>
    </interactant>
    <organismsDiffer>false</organismsDiffer>
    <experiments>3</experiments>
</comment>
<comment type="interaction">
    <interactant intactId="EBI-8652667">
        <id>O14817</id>
    </interactant>
    <interactant intactId="EBI-740785">
        <id>P49639</id>
        <label>HOXA1</label>
    </interactant>
    <organismsDiffer>false</organismsDiffer>
    <experiments>3</experiments>
</comment>
<comment type="interaction">
    <interactant intactId="EBI-8652667">
        <id>O14817</id>
    </interactant>
    <interactant intactId="EBI-10171774">
        <id>P60410</id>
        <label>KRTAP10-8</label>
    </interactant>
    <organismsDiffer>false</organismsDiffer>
    <experiments>3</experiments>
</comment>
<comment type="interaction">
    <interactant intactId="EBI-8652667">
        <id>O14817</id>
    </interactant>
    <interactant intactId="EBI-10302392">
        <id>Q9BYQ6</id>
        <label>KRTAP4-11</label>
    </interactant>
    <organismsDiffer>false</organismsDiffer>
    <experiments>3</experiments>
</comment>
<comment type="interaction">
    <interactant intactId="EBI-8652667">
        <id>O14817</id>
    </interactant>
    <interactant intactId="EBI-11993254">
        <id>Q9BYR2</id>
        <label>KRTAP4-5</label>
    </interactant>
    <organismsDiffer>false</organismsDiffer>
    <experiments>3</experiments>
</comment>
<comment type="interaction">
    <interactant intactId="EBI-8652667">
        <id>O14817</id>
    </interactant>
    <interactant intactId="EBI-11962084">
        <id>Q3LI66</id>
        <label>KRTAP6-2</label>
    </interactant>
    <organismsDiffer>false</organismsDiffer>
    <experiments>3</experiments>
</comment>
<comment type="interaction">
    <interactant intactId="EBI-8652667">
        <id>O14817</id>
    </interactant>
    <interactant intactId="EBI-1044640">
        <id>Q9BYQ4</id>
        <label>KRTAP9-2</label>
    </interactant>
    <organismsDiffer>false</organismsDiffer>
    <experiments>3</experiments>
</comment>
<comment type="interaction">
    <interactant intactId="EBI-8652667">
        <id>O14817</id>
    </interactant>
    <interactant intactId="EBI-1043191">
        <id>Q9BYQ3</id>
        <label>KRTAP9-3</label>
    </interactant>
    <organismsDiffer>false</organismsDiffer>
    <experiments>3</experiments>
</comment>
<comment type="interaction">
    <interactant intactId="EBI-8652667">
        <id>O14817</id>
    </interactant>
    <interactant intactId="EBI-11962058">
        <id>Q5T7P2</id>
        <label>LCE1A</label>
    </interactant>
    <organismsDiffer>false</organismsDiffer>
    <experiments>3</experiments>
</comment>
<comment type="interaction">
    <interactant intactId="EBI-8652667">
        <id>O14817</id>
    </interactant>
    <interactant intactId="EBI-11478468">
        <id>O14633</id>
        <label>LCE2B</label>
    </interactant>
    <organismsDiffer>false</organismsDiffer>
    <experiments>3</experiments>
</comment>
<comment type="interaction">
    <interactant intactId="EBI-8652667">
        <id>O14817</id>
    </interactant>
    <interactant intactId="EBI-10246750">
        <id>Q5TA82</id>
        <label>LCE2D</label>
    </interactant>
    <organismsDiffer>false</organismsDiffer>
    <experiments>3</experiments>
</comment>
<comment type="interaction">
    <interactant intactId="EBI-8652667">
        <id>O14817</id>
    </interactant>
    <interactant intactId="EBI-9394625">
        <id>Q5TA76</id>
        <label>LCE3A</label>
    </interactant>
    <organismsDiffer>false</organismsDiffer>
    <experiments>3</experiments>
</comment>
<comment type="interaction">
    <interactant intactId="EBI-8652667">
        <id>O14817</id>
    </interactant>
    <interactant intactId="EBI-10245291">
        <id>Q5T5A8</id>
        <label>LCE3C</label>
    </interactant>
    <organismsDiffer>false</organismsDiffer>
    <experiments>3</experiments>
</comment>
<comment type="interaction">
    <interactant intactId="EBI-8652667">
        <id>O14817</id>
    </interactant>
    <interactant intactId="EBI-6658837">
        <id>Q9BYE3</id>
        <label>LCE3D</label>
    </interactant>
    <organismsDiffer>false</organismsDiffer>
    <experiments>3</experiments>
</comment>
<comment type="interaction">
    <interactant intactId="EBI-8652667">
        <id>O14817</id>
    </interactant>
    <interactant intactId="EBI-10246358">
        <id>Q5TA78</id>
        <label>LCE4A</label>
    </interactant>
    <organismsDiffer>false</organismsDiffer>
    <experiments>3</experiments>
</comment>
<comment type="interaction">
    <interactant intactId="EBI-8652667">
        <id>O14817</id>
    </interactant>
    <interactant intactId="EBI-11304917">
        <id>Q8N386</id>
        <label>LRRC25</label>
    </interactant>
    <organismsDiffer>false</organismsDiffer>
    <experiments>3</experiments>
</comment>
<comment type="interaction">
    <interactant intactId="EBI-8652667">
        <id>O14817</id>
    </interactant>
    <interactant intactId="EBI-724076">
        <id>Q99750</id>
        <label>MDFI</label>
    </interactant>
    <organismsDiffer>false</organismsDiffer>
    <experiments>3</experiments>
</comment>
<comment type="interaction">
    <interactant intactId="EBI-8652667">
        <id>O14817</id>
    </interactant>
    <interactant intactId="EBI-2340269">
        <id>Q13064</id>
        <label>MKRN3</label>
    </interactant>
    <organismsDiffer>false</organismsDiffer>
    <experiments>3</experiments>
</comment>
<comment type="interaction">
    <interactant intactId="EBI-8652667">
        <id>O14817</id>
    </interactant>
    <interactant intactId="EBI-945833">
        <id>Q7Z3S9</id>
        <label>NOTCH2NLA</label>
    </interactant>
    <organismsDiffer>false</organismsDiffer>
    <experiments>4</experiments>
</comment>
<comment type="interaction">
    <interactant intactId="EBI-8652667">
        <id>O14817</id>
    </interactant>
    <interactant intactId="EBI-22310682">
        <id>P0DPK4</id>
        <label>NOTCH2NLC</label>
    </interactant>
    <organismsDiffer>false</organismsDiffer>
    <experiments>3</experiments>
</comment>
<comment type="interaction">
    <interactant intactId="EBI-8652667">
        <id>O14817</id>
    </interactant>
    <interactant intactId="EBI-13644623">
        <id>Q92570</id>
        <label>NR4A3</label>
    </interactant>
    <organismsDiffer>false</organismsDiffer>
    <experiments>3</experiments>
</comment>
<comment type="interaction">
    <interactant intactId="EBI-8652667">
        <id>O14817</id>
    </interactant>
    <interactant intactId="EBI-740446">
        <id>P32242</id>
        <label>OTX1</label>
    </interactant>
    <organismsDiffer>false</organismsDiffer>
    <experiments>3</experiments>
</comment>
<comment type="interaction">
    <interactant intactId="EBI-8652667">
        <id>O14817</id>
    </interactant>
    <interactant intactId="EBI-14084211">
        <id>A2BDE7</id>
        <label>PHLDA1</label>
    </interactant>
    <organismsDiffer>false</organismsDiffer>
    <experiments>3</experiments>
</comment>
<comment type="interaction">
    <interactant intactId="EBI-8652667">
        <id>O14817</id>
    </interactant>
    <interactant intactId="EBI-769257">
        <id>Q9NRQ2</id>
        <label>PLSCR4</label>
    </interactant>
    <organismsDiffer>false</organismsDiffer>
    <experiments>3</experiments>
</comment>
<comment type="interaction">
    <interactant intactId="EBI-8652667">
        <id>O14817</id>
    </interactant>
    <interactant intactId="EBI-1046170">
        <id>O95470</id>
        <label>SGPL1</label>
    </interactant>
    <organismsDiffer>false</organismsDiffer>
    <experiments>3</experiments>
</comment>
<comment type="interaction">
    <interactant intactId="EBI-8652667">
        <id>O14817</id>
    </interactant>
    <interactant intactId="EBI-750487">
        <id>Q8WW24</id>
        <label>TEKT4</label>
    </interactant>
    <organismsDiffer>false</organismsDiffer>
    <experiments>3</experiments>
</comment>
<comment type="interaction">
    <interactant intactId="EBI-8652667">
        <id>O14817</id>
    </interactant>
    <interactant intactId="EBI-3915978">
        <id>Q96A25</id>
        <label>TMEM106A</label>
    </interactant>
    <organismsDiffer>false</organismsDiffer>
    <experiments>3</experiments>
</comment>
<comment type="interaction">
    <interactant intactId="EBI-8652667">
        <id>O14817</id>
    </interactant>
    <interactant intactId="EBI-11957216">
        <id>A8MV65-2</id>
        <label>VGLL3</label>
    </interactant>
    <organismsDiffer>false</organismsDiffer>
    <experiments>3</experiments>
</comment>
<comment type="subcellular location">
    <subcellularLocation>
        <location evidence="4 6">Cell membrane</location>
        <topology>Multi-pass membrane protein</topology>
    </subcellularLocation>
</comment>
<comment type="tissue specificity">
    <text>Expressed in multiple tissues but is absent in brain, lymphoid cells, and platelets.</text>
</comment>
<comment type="similarity">
    <text evidence="9">Belongs to the tetraspanin (TM4SF) family.</text>
</comment>
<sequence>MARACLQAVKYLMFAFNLLFWLGGCGVLGVGIWLAATQGSFATLSSSFPSLSAANLLIITGAFVMAIGFVGCLGAIKENKCLLLTFFLLLLLVFLLEATIAILFFAYTDKIDRYAQQDLKKGLHLYGTQGNVGLTNAWSIIQTDFRCCGVSNYTDWFEVYNATRVPDSCCLEFSESCGLHAPGTWWKAPCYETVKVWLQENLLAVGIFGLCTALVQILGLTFAMTMYCQVVKADTYCA</sequence>